<evidence type="ECO:0000250" key="1">
    <source>
        <dbReference type="UniProtKB" id="Q9Z4J7"/>
    </source>
</evidence>
<evidence type="ECO:0000269" key="2">
    <source>
    </source>
</evidence>
<evidence type="ECO:0000269" key="3">
    <source>
    </source>
</evidence>
<evidence type="ECO:0000269" key="4">
    <source>
    </source>
</evidence>
<evidence type="ECO:0000303" key="5">
    <source>
    </source>
</evidence>
<evidence type="ECO:0000303" key="6">
    <source>
    </source>
</evidence>
<evidence type="ECO:0000303" key="7">
    <source>
    </source>
</evidence>
<evidence type="ECO:0000305" key="8"/>
<evidence type="ECO:0000305" key="9">
    <source>
    </source>
</evidence>
<evidence type="ECO:0000305" key="10">
    <source>
    </source>
</evidence>
<evidence type="ECO:0000305" key="11">
    <source>
    </source>
</evidence>
<evidence type="ECO:0000312" key="12">
    <source>
        <dbReference type="EMBL" id="ACS39584.1"/>
    </source>
</evidence>
<evidence type="ECO:0007744" key="13">
    <source>
        <dbReference type="PDB" id="6OC5"/>
    </source>
</evidence>
<evidence type="ECO:0007744" key="14">
    <source>
        <dbReference type="PDB" id="6OC6"/>
    </source>
</evidence>
<evidence type="ECO:0007829" key="15">
    <source>
        <dbReference type="PDB" id="6OC5"/>
    </source>
</evidence>
<evidence type="ECO:0007829" key="16">
    <source>
        <dbReference type="PDB" id="6OC6"/>
    </source>
</evidence>
<proteinExistence type="evidence at protein level"/>
<protein>
    <recommendedName>
        <fullName evidence="9 10">Lanthanide-dependent methanol dehydrogenase</fullName>
        <shortName evidence="9 10">Lanthanide-dependent MDH</shortName>
        <shortName evidence="9 10">Ln(3+)-dependent MDH</shortName>
        <ecNumber evidence="9 11">1.1.2.10</ecNumber>
    </recommendedName>
    <alternativeName>
        <fullName evidence="6">La(3+)- and PQQ-dependent MDH</fullName>
    </alternativeName>
    <alternativeName>
        <fullName evidence="5">La(3+)-dependent methanol dehydrogenase</fullName>
        <shortName evidence="5">La(3+)-dependent MDH</shortName>
    </alternativeName>
</protein>
<accession>C5B120</accession>
<comment type="function">
    <text evidence="2 3 4 10 11">Catalyzes the oxidation of methanol to formaldehyde, but only in the presence of lanthanides (Ln). Contributes to methanol metabolism when La(3+) is present in the natural environment of the bacterium, allowing bacterial growth with methanol as carbon and energy source. Thereby is an essential enzyme for Ln-dependent methylotrophy (PubMed:23209751, PubMed:30862918, PubMed:32366463). Uses a specific cytochrome cL (XoxG), encoded by the adjacent gene in the locus, as electron acceptor (Probable). Also plays a role in the transcriptional regulation of the mxa and xox1 operons, most likely acting as a lanthanide sensory module (PubMed:32366463). Is also able to oxidize formaldehyde to formate in vitro, but this activity does not occur in vivo (PubMed:30862918).</text>
</comment>
<comment type="catalytic activity">
    <reaction evidence="9 11">
        <text>2 Fe(III)-[cytochrome cL] + methanol = 2 Fe(II)-[cytochrome cL] + formaldehyde + 2 H(+)</text>
        <dbReference type="Rhea" id="RHEA:51008"/>
        <dbReference type="Rhea" id="RHEA-COMP:12863"/>
        <dbReference type="Rhea" id="RHEA-COMP:12864"/>
        <dbReference type="ChEBI" id="CHEBI:15378"/>
        <dbReference type="ChEBI" id="CHEBI:16842"/>
        <dbReference type="ChEBI" id="CHEBI:17790"/>
        <dbReference type="ChEBI" id="CHEBI:29033"/>
        <dbReference type="ChEBI" id="CHEBI:29034"/>
        <dbReference type="EC" id="1.1.2.10"/>
    </reaction>
    <physiologicalReaction direction="left-to-right" evidence="2 4">
        <dbReference type="Rhea" id="RHEA:51009"/>
    </physiologicalReaction>
</comment>
<comment type="cofactor">
    <cofactor evidence="2 3 4">
        <name>La(3+)</name>
        <dbReference type="ChEBI" id="CHEBI:49701"/>
    </cofactor>
    <cofactor evidence="3">
        <name>Nd(3+)</name>
        <dbReference type="ChEBI" id="CHEBI:229785"/>
    </cofactor>
    <text evidence="3 4">Exhibits enzymatic activity only in the presence of lanthanide ions (PubMed:30862918, PubMed:32366463). Is inactive when binding Ca(2+) ions in the absence of La(3+) (PubMed:32366463). Binds one lanthanide ion per subunit (PubMed:30862918, PubMed:32366463).</text>
</comment>
<comment type="cofactor">
    <cofactor evidence="3 4">
        <name>pyrroloquinoline quinone</name>
        <dbReference type="ChEBI" id="CHEBI:58442"/>
    </cofactor>
    <text evidence="4">Binds 1 PQQ group per subunit.</text>
</comment>
<comment type="biophysicochemical properties">
    <kinetics>
        <KM evidence="3">44 uM for methanol (in the presence of La(3+))</KM>
        <KM evidence="3">29 uM for methanol (in the presence of Nd(3+))</KM>
        <KM evidence="3">96 uM for formaldehyde (in the presence of La(3+))</KM>
        <KM evidence="3">133 uM for formaldehyde (in the presence of Nd(3+))</KM>
        <KM evidence="3">67 uM for ethanol (in the presence of La(3+))</KM>
        <Vmax evidence="3">5.72 umol/min/mg enzyme for the La(3+)-dependent oxidation of methanol using artificial electron acceptor</Vmax>
        <Vmax evidence="3">2.42 umol/min/mg enzyme for the Nd(3+)-dependent oxidation of methanol using artificial electron acceptor</Vmax>
        <Vmax evidence="3">5.0 umol/min/mg enzyme for the La(3+)-dependent oxidation of formaldehyde using artificial electron acceptor</Vmax>
        <Vmax evidence="3">2.33 umol/min/mg enzyme for the Nd(3+)-dependent oxidation of formaldehyde using artificial electron acceptor</Vmax>
        <Vmax evidence="3">6.21 umol/min/mg enzyme for the La(3+)-dependent oxidation of ethanol using artificial electron acceptor</Vmax>
    </kinetics>
</comment>
<comment type="subunit">
    <text evidence="2">Homodimer.</text>
</comment>
<comment type="subcellular location">
    <subcellularLocation>
        <location evidence="9">Periplasm</location>
    </subcellularLocation>
</comment>
<comment type="induction">
    <text evidence="3">Highly up-regulated in the presence of La(3+).</text>
</comment>
<comment type="similarity">
    <text evidence="8">Belongs to the bacterial PQQ dehydrogenase family.</text>
</comment>
<dbReference type="EC" id="1.1.2.10" evidence="9 11"/>
<dbReference type="EMBL" id="CP001510">
    <property type="protein sequence ID" value="ACS39584.1"/>
    <property type="molecule type" value="Genomic_DNA"/>
</dbReference>
<dbReference type="RefSeq" id="WP_003597620.1">
    <property type="nucleotide sequence ID" value="NC_012808.1"/>
</dbReference>
<dbReference type="PDB" id="6OC5">
    <property type="method" value="X-ray"/>
    <property type="resolution" value="2.80 A"/>
    <property type="chains" value="A/B=1-601"/>
</dbReference>
<dbReference type="PDB" id="6OC6">
    <property type="method" value="X-ray"/>
    <property type="resolution" value="2.89 A"/>
    <property type="chains" value="A/B=1-601"/>
</dbReference>
<dbReference type="PDBsum" id="6OC5"/>
<dbReference type="PDBsum" id="6OC6"/>
<dbReference type="SMR" id="C5B120"/>
<dbReference type="STRING" id="272630.MexAM1_META1p1740"/>
<dbReference type="GeneID" id="72989466"/>
<dbReference type="KEGG" id="mea:Mex_1p1740"/>
<dbReference type="eggNOG" id="COG4993">
    <property type="taxonomic scope" value="Bacteria"/>
</dbReference>
<dbReference type="HOGENOM" id="CLU_018478_0_0_5"/>
<dbReference type="OrthoDB" id="9794322at2"/>
<dbReference type="Proteomes" id="UP000009081">
    <property type="component" value="Chromosome"/>
</dbReference>
<dbReference type="GO" id="GO:0016020">
    <property type="term" value="C:membrane"/>
    <property type="evidence" value="ECO:0007669"/>
    <property type="project" value="InterPro"/>
</dbReference>
<dbReference type="GO" id="GO:0030288">
    <property type="term" value="C:outer membrane-bounded periplasmic space"/>
    <property type="evidence" value="ECO:0007669"/>
    <property type="project" value="InterPro"/>
</dbReference>
<dbReference type="GO" id="GO:0005509">
    <property type="term" value="F:calcium ion binding"/>
    <property type="evidence" value="ECO:0007669"/>
    <property type="project" value="InterPro"/>
</dbReference>
<dbReference type="GO" id="GO:0016614">
    <property type="term" value="F:oxidoreductase activity, acting on CH-OH group of donors"/>
    <property type="evidence" value="ECO:0007669"/>
    <property type="project" value="InterPro"/>
</dbReference>
<dbReference type="GO" id="GO:0015945">
    <property type="term" value="P:methanol metabolic process"/>
    <property type="evidence" value="ECO:0007669"/>
    <property type="project" value="UniProtKB-KW"/>
</dbReference>
<dbReference type="CDD" id="cd10278">
    <property type="entry name" value="PQQ_MDH"/>
    <property type="match status" value="1"/>
</dbReference>
<dbReference type="FunFam" id="2.140.10.10:FF:000003">
    <property type="entry name" value="Methanol dehydrogenase, large subunit"/>
    <property type="match status" value="1"/>
</dbReference>
<dbReference type="Gene3D" id="2.140.10.10">
    <property type="entry name" value="Quinoprotein alcohol dehydrogenase-like superfamily"/>
    <property type="match status" value="1"/>
</dbReference>
<dbReference type="InterPro" id="IPR018391">
    <property type="entry name" value="PQQ_b-propeller_rpt"/>
</dbReference>
<dbReference type="InterPro" id="IPR017512">
    <property type="entry name" value="PQQ_MeOH/EtOH_DH"/>
</dbReference>
<dbReference type="InterPro" id="IPR002372">
    <property type="entry name" value="PQQ_rpt_dom"/>
</dbReference>
<dbReference type="InterPro" id="IPR011047">
    <property type="entry name" value="Quinoprotein_ADH-like_sf"/>
</dbReference>
<dbReference type="InterPro" id="IPR001479">
    <property type="entry name" value="Quinoprotein_DH_CS"/>
</dbReference>
<dbReference type="NCBIfam" id="TIGR03075">
    <property type="entry name" value="PQQ_enz_alc_DH"/>
    <property type="match status" value="1"/>
</dbReference>
<dbReference type="PANTHER" id="PTHR32303">
    <property type="entry name" value="QUINOPROTEIN ALCOHOL DEHYDROGENASE (CYTOCHROME C)"/>
    <property type="match status" value="1"/>
</dbReference>
<dbReference type="PANTHER" id="PTHR32303:SF4">
    <property type="entry name" value="QUINOPROTEIN GLUCOSE DEHYDROGENASE"/>
    <property type="match status" value="1"/>
</dbReference>
<dbReference type="Pfam" id="PF01011">
    <property type="entry name" value="PQQ"/>
    <property type="match status" value="2"/>
</dbReference>
<dbReference type="SMART" id="SM00564">
    <property type="entry name" value="PQQ"/>
    <property type="match status" value="5"/>
</dbReference>
<dbReference type="SUPFAM" id="SSF50998">
    <property type="entry name" value="Quinoprotein alcohol dehydrogenase-like"/>
    <property type="match status" value="1"/>
</dbReference>
<dbReference type="PROSITE" id="PS00364">
    <property type="entry name" value="BACTERIAL_PQQ_2"/>
    <property type="match status" value="1"/>
</dbReference>
<sequence>MRAVHLLALGAGLAAASPALANESVLKGVANPAEQVLQTVDYANTRYSKLDQINASNVKNLQVAWTFSTGVLRGHEGSPLVVGNIMYVHTPFPNIVYALDLDQGAKIVWKYEPKQDPSVIPVMCCDTVNRGLAYADGAILLHQADTTLVSLDAKSGKVNWSVKNGDPSKGETNTATVLPVKDKVIVGISGGEFGVQCHVTAYDLKSGKKVWRGYSIGPDDQLIVDPEKTTSLGKPIGKDSSLKTWEGDQWKTGGGCTWGWFSYDPKLDLMYYGSGNPSTWNPKQRPGDNKWSMTIWARNPDTGMAKWVYQMTPHDEWDFDGINEMILTDQKFDGKDRPLLTHFDRNGFGYTLDRATGEVLVAEKFDPVVNWATKVDLDKGSKTYGRPLVVSKYSTEQNGEDVNSKGICPAALGTKDQQPAAFSPKTGLFYVPTNHVCMDYEPFRVTYTPGQPYVGATLSMYPAPGSHGGMGNFIAWDNLQGKIKWSNPEQFSAWGGALATAGDVVFYGTLEGFLKAVDSKTGKELYKFKTPSGIIGNVMTYEHKGKQHVAVLSGVGGWAGIGLAAGLTDPNAGLGAVGGYAALSSYTNLGGQLTVFSLPNN</sequence>
<organism>
    <name type="scientific">Methylorubrum extorquens (strain ATCC 14718 / DSM 1338 / JCM 2805 / NCIMB 9133 / AM1)</name>
    <name type="common">Methylobacterium extorquens</name>
    <dbReference type="NCBI Taxonomy" id="272630"/>
    <lineage>
        <taxon>Bacteria</taxon>
        <taxon>Pseudomonadati</taxon>
        <taxon>Pseudomonadota</taxon>
        <taxon>Alphaproteobacteria</taxon>
        <taxon>Hyphomicrobiales</taxon>
        <taxon>Methylobacteriaceae</taxon>
        <taxon>Methylorubrum</taxon>
    </lineage>
</organism>
<feature type="signal peptide" evidence="2">
    <location>
        <begin position="1"/>
        <end position="21"/>
    </location>
</feature>
<feature type="chain" id="PRO_5002945887" description="Lanthanide-dependent methanol dehydrogenase">
    <location>
        <begin position="22"/>
        <end position="601"/>
    </location>
</feature>
<feature type="active site" description="Proton acceptor" evidence="1">
    <location>
        <position position="318"/>
    </location>
</feature>
<feature type="binding site" evidence="4 14">
    <location>
        <position position="130"/>
    </location>
    <ligand>
        <name>pyrroloquinoline quinone</name>
        <dbReference type="ChEBI" id="CHEBI:58442"/>
    </ligand>
</feature>
<feature type="binding site" evidence="4 14">
    <location>
        <position position="174"/>
    </location>
    <ligand>
        <name>pyrroloquinoline quinone</name>
        <dbReference type="ChEBI" id="CHEBI:58442"/>
    </ligand>
</feature>
<feature type="binding site" evidence="4 14">
    <location>
        <position position="189"/>
    </location>
    <ligand>
        <name>pyrroloquinoline quinone</name>
        <dbReference type="ChEBI" id="CHEBI:58442"/>
    </ligand>
</feature>
<feature type="binding site" evidence="4 14">
    <location>
        <position position="190"/>
    </location>
    <ligand>
        <name>pyrroloquinoline quinone</name>
        <dbReference type="ChEBI" id="CHEBI:58442"/>
    </ligand>
</feature>
<feature type="binding site" evidence="4 14">
    <location>
        <position position="191"/>
    </location>
    <ligand>
        <name>pyrroloquinoline quinone</name>
        <dbReference type="ChEBI" id="CHEBI:58442"/>
    </ligand>
</feature>
<feature type="binding site" evidence="4 13 14">
    <location>
        <position position="192"/>
    </location>
    <ligand>
        <name>La(3+)</name>
        <dbReference type="ChEBI" id="CHEBI:49701"/>
    </ligand>
</feature>
<feature type="binding site" evidence="4 14">
    <location>
        <position position="258"/>
    </location>
    <ligand>
        <name>pyrroloquinoline quinone</name>
        <dbReference type="ChEBI" id="CHEBI:58442"/>
    </ligand>
</feature>
<feature type="binding site" evidence="4 13 14">
    <location>
        <position position="276"/>
    </location>
    <ligand>
        <name>La(3+)</name>
        <dbReference type="ChEBI" id="CHEBI:49701"/>
    </ligand>
</feature>
<feature type="binding site" evidence="4 13 14">
    <location>
        <position position="318"/>
    </location>
    <ligand>
        <name>La(3+)</name>
        <dbReference type="ChEBI" id="CHEBI:49701"/>
    </ligand>
</feature>
<feature type="binding site" evidence="4 13 14">
    <location>
        <position position="320"/>
    </location>
    <ligand>
        <name>La(3+)</name>
        <dbReference type="ChEBI" id="CHEBI:49701"/>
    </ligand>
</feature>
<feature type="binding site" evidence="4 14">
    <location>
        <position position="345"/>
    </location>
    <ligand>
        <name>pyrroloquinoline quinone</name>
        <dbReference type="ChEBI" id="CHEBI:58442"/>
    </ligand>
</feature>
<feature type="binding site" evidence="4 14">
    <location>
        <position position="494"/>
    </location>
    <ligand>
        <name>pyrroloquinoline quinone</name>
        <dbReference type="ChEBI" id="CHEBI:58442"/>
    </ligand>
</feature>
<feature type="binding site" evidence="4 14">
    <location>
        <position position="558"/>
    </location>
    <ligand>
        <name>pyrroloquinoline quinone</name>
        <dbReference type="ChEBI" id="CHEBI:58442"/>
    </ligand>
</feature>
<feature type="disulfide bond" evidence="13">
    <location>
        <begin position="124"/>
        <end position="125"/>
    </location>
</feature>
<feature type="disulfide bond" evidence="13 14">
    <location>
        <begin position="197"/>
        <end position="256"/>
    </location>
</feature>
<feature type="disulfide bond" evidence="13 14">
    <location>
        <begin position="408"/>
        <end position="437"/>
    </location>
</feature>
<feature type="mutagenesis site" description="Loss of methanol dehydrogenase activity. In contrast to wild-type, the mutant cells are incapable of growth with methanol and La(3+). The mutant protein is unable to bind La(3+) and is loaded with Ca(2+) regardless of whether or not La(3+) is included in the growth medium, but is inactive." evidence="4">
    <original>D</original>
    <variation>A</variation>
    <location>
        <position position="320"/>
    </location>
</feature>
<feature type="helix" evidence="15">
    <location>
        <begin position="23"/>
        <end position="30"/>
    </location>
</feature>
<feature type="turn" evidence="15">
    <location>
        <begin position="55"/>
        <end position="57"/>
    </location>
</feature>
<feature type="helix" evidence="15">
    <location>
        <begin position="58"/>
        <end position="60"/>
    </location>
</feature>
<feature type="strand" evidence="15">
    <location>
        <begin position="62"/>
        <end position="68"/>
    </location>
</feature>
<feature type="strand" evidence="15">
    <location>
        <begin position="80"/>
        <end position="82"/>
    </location>
</feature>
<feature type="strand" evidence="15">
    <location>
        <begin position="85"/>
        <end position="89"/>
    </location>
</feature>
<feature type="turn" evidence="15">
    <location>
        <begin position="92"/>
        <end position="94"/>
    </location>
</feature>
<feature type="strand" evidence="15">
    <location>
        <begin position="96"/>
        <end position="100"/>
    </location>
</feature>
<feature type="turn" evidence="15">
    <location>
        <begin position="101"/>
        <end position="104"/>
    </location>
</feature>
<feature type="strand" evidence="15">
    <location>
        <begin position="105"/>
        <end position="111"/>
    </location>
</feature>
<feature type="helix" evidence="15">
    <location>
        <begin position="117"/>
        <end position="119"/>
    </location>
</feature>
<feature type="turn" evidence="15">
    <location>
        <begin position="120"/>
        <end position="122"/>
    </location>
</feature>
<feature type="strand" evidence="15">
    <location>
        <begin position="133"/>
        <end position="135"/>
    </location>
</feature>
<feature type="strand" evidence="15">
    <location>
        <begin position="138"/>
        <end position="142"/>
    </location>
</feature>
<feature type="strand" evidence="15">
    <location>
        <begin position="146"/>
        <end position="152"/>
    </location>
</feature>
<feature type="turn" evidence="15">
    <location>
        <begin position="153"/>
        <end position="155"/>
    </location>
</feature>
<feature type="strand" evidence="15">
    <location>
        <begin position="158"/>
        <end position="163"/>
    </location>
</feature>
<feature type="helix" evidence="15">
    <location>
        <begin position="167"/>
        <end position="169"/>
    </location>
</feature>
<feature type="strand" evidence="15">
    <location>
        <begin position="177"/>
        <end position="180"/>
    </location>
</feature>
<feature type="strand" evidence="15">
    <location>
        <begin position="183"/>
        <end position="187"/>
    </location>
</feature>
<feature type="helix" evidence="15">
    <location>
        <begin position="191"/>
        <end position="193"/>
    </location>
</feature>
<feature type="strand" evidence="15">
    <location>
        <begin position="198"/>
        <end position="203"/>
    </location>
</feature>
<feature type="turn" evidence="15">
    <location>
        <begin position="204"/>
        <end position="206"/>
    </location>
</feature>
<feature type="strand" evidence="15">
    <location>
        <begin position="209"/>
        <end position="218"/>
    </location>
</feature>
<feature type="helix" evidence="15">
    <location>
        <begin position="219"/>
        <end position="222"/>
    </location>
</feature>
<feature type="turn" evidence="15">
    <location>
        <begin position="226"/>
        <end position="228"/>
    </location>
</feature>
<feature type="turn" evidence="15">
    <location>
        <begin position="238"/>
        <end position="241"/>
    </location>
</feature>
<feature type="helix" evidence="15">
    <location>
        <begin position="242"/>
        <end position="244"/>
    </location>
</feature>
<feature type="turn" evidence="15">
    <location>
        <begin position="247"/>
        <end position="252"/>
    </location>
</feature>
<feature type="strand" evidence="15">
    <location>
        <begin position="262"/>
        <end position="264"/>
    </location>
</feature>
<feature type="turn" evidence="15">
    <location>
        <begin position="265"/>
        <end position="268"/>
    </location>
</feature>
<feature type="strand" evidence="15">
    <location>
        <begin position="269"/>
        <end position="273"/>
    </location>
</feature>
<feature type="strand" evidence="15">
    <location>
        <begin position="282"/>
        <end position="285"/>
    </location>
</feature>
<feature type="turn" evidence="15">
    <location>
        <begin position="290"/>
        <end position="293"/>
    </location>
</feature>
<feature type="strand" evidence="15">
    <location>
        <begin position="294"/>
        <end position="298"/>
    </location>
</feature>
<feature type="turn" evidence="15">
    <location>
        <begin position="300"/>
        <end position="302"/>
    </location>
</feature>
<feature type="strand" evidence="15">
    <location>
        <begin position="305"/>
        <end position="314"/>
    </location>
</feature>
<feature type="strand" evidence="15">
    <location>
        <begin position="325"/>
        <end position="332"/>
    </location>
</feature>
<feature type="strand" evidence="15">
    <location>
        <begin position="335"/>
        <end position="343"/>
    </location>
</feature>
<feature type="strand" evidence="15">
    <location>
        <begin position="347"/>
        <end position="353"/>
    </location>
</feature>
<feature type="turn" evidence="15">
    <location>
        <begin position="354"/>
        <end position="356"/>
    </location>
</feature>
<feature type="strand" evidence="15">
    <location>
        <begin position="359"/>
        <end position="366"/>
    </location>
</feature>
<feature type="strand" evidence="15">
    <location>
        <begin position="371"/>
        <end position="375"/>
    </location>
</feature>
<feature type="strand" evidence="15">
    <location>
        <begin position="381"/>
        <end position="383"/>
    </location>
</feature>
<feature type="strand" evidence="15">
    <location>
        <begin position="387"/>
        <end position="389"/>
    </location>
</feature>
<feature type="helix" evidence="16">
    <location>
        <begin position="391"/>
        <end position="393"/>
    </location>
</feature>
<feature type="helix" evidence="15">
    <location>
        <begin position="395"/>
        <end position="398"/>
    </location>
</feature>
<feature type="strand" evidence="15">
    <location>
        <begin position="404"/>
        <end position="409"/>
    </location>
</feature>
<feature type="strand" evidence="15">
    <location>
        <begin position="421"/>
        <end position="423"/>
    </location>
</feature>
<feature type="turn" evidence="15">
    <location>
        <begin position="424"/>
        <end position="427"/>
    </location>
</feature>
<feature type="strand" evidence="15">
    <location>
        <begin position="428"/>
        <end position="434"/>
    </location>
</feature>
<feature type="strand" evidence="15">
    <location>
        <begin position="436"/>
        <end position="442"/>
    </location>
</feature>
<feature type="strand" evidence="15">
    <location>
        <begin position="456"/>
        <end position="462"/>
    </location>
</feature>
<feature type="strand" evidence="15">
    <location>
        <begin position="466"/>
        <end position="468"/>
    </location>
</feature>
<feature type="strand" evidence="15">
    <location>
        <begin position="470"/>
        <end position="477"/>
    </location>
</feature>
<feature type="turn" evidence="15">
    <location>
        <begin position="478"/>
        <end position="481"/>
    </location>
</feature>
<feature type="strand" evidence="15">
    <location>
        <begin position="482"/>
        <end position="491"/>
    </location>
</feature>
<feature type="strand" evidence="15">
    <location>
        <begin position="498"/>
        <end position="500"/>
    </location>
</feature>
<feature type="strand" evidence="15">
    <location>
        <begin position="503"/>
        <end position="508"/>
    </location>
</feature>
<feature type="strand" evidence="15">
    <location>
        <begin position="512"/>
        <end position="521"/>
    </location>
</feature>
<feature type="strand" evidence="15">
    <location>
        <begin position="524"/>
        <end position="529"/>
    </location>
</feature>
<feature type="strand" evidence="15">
    <location>
        <begin position="539"/>
        <end position="543"/>
    </location>
</feature>
<feature type="strand" evidence="15">
    <location>
        <begin position="546"/>
        <end position="552"/>
    </location>
</feature>
<feature type="turn" evidence="15">
    <location>
        <begin position="557"/>
        <end position="559"/>
    </location>
</feature>
<feature type="helix" evidence="15">
    <location>
        <begin position="561"/>
        <end position="564"/>
    </location>
</feature>
<feature type="strand" evidence="15">
    <location>
        <begin position="569"/>
        <end position="571"/>
    </location>
</feature>
<feature type="helix" evidence="15">
    <location>
        <begin position="573"/>
        <end position="575"/>
    </location>
</feature>
<feature type="helix" evidence="15">
    <location>
        <begin position="576"/>
        <end position="579"/>
    </location>
</feature>
<feature type="helix" evidence="15">
    <location>
        <begin position="581"/>
        <end position="585"/>
    </location>
</feature>
<feature type="strand" evidence="15">
    <location>
        <begin position="592"/>
        <end position="597"/>
    </location>
</feature>
<name>XOXF1_METEA</name>
<gene>
    <name evidence="5 7" type="primary">xoxF1</name>
    <name evidence="12" type="synonym">xoxF</name>
    <name evidence="12" type="ordered locus">MexAM1_META1p1740</name>
</gene>
<keyword id="KW-0002">3D-structure</keyword>
<keyword id="KW-0903">Direct protein sequencing</keyword>
<keyword id="KW-1015">Disulfide bond</keyword>
<keyword id="KW-0479">Metal-binding</keyword>
<keyword id="KW-0485">Methanol utilization</keyword>
<keyword id="KW-0560">Oxidoreductase</keyword>
<keyword id="KW-0574">Periplasm</keyword>
<keyword id="KW-0634">PQQ</keyword>
<keyword id="KW-1185">Reference proteome</keyword>
<keyword id="KW-0732">Signal</keyword>
<reference key="1">
    <citation type="journal article" date="2009" name="PLoS ONE">
        <title>Methylobacterium genome sequences: a reference blueprint to investigate microbial metabolism of C1 compounds from natural and industrial sources.</title>
        <authorList>
            <person name="Vuilleumier S."/>
            <person name="Chistoserdova L."/>
            <person name="Lee M.-C."/>
            <person name="Bringel F."/>
            <person name="Lajus A."/>
            <person name="Zhou Y."/>
            <person name="Gourion B."/>
            <person name="Barbe V."/>
            <person name="Chang J."/>
            <person name="Cruveiller S."/>
            <person name="Dossat C."/>
            <person name="Gillett W."/>
            <person name="Gruffaz C."/>
            <person name="Haugen E."/>
            <person name="Hourcade E."/>
            <person name="Levy R."/>
            <person name="Mangenot S."/>
            <person name="Muller E."/>
            <person name="Nadalig T."/>
            <person name="Pagni M."/>
            <person name="Penny C."/>
            <person name="Peyraud R."/>
            <person name="Robinson D.G."/>
            <person name="Roche D."/>
            <person name="Rouy Z."/>
            <person name="Saenampechek C."/>
            <person name="Salvignol G."/>
            <person name="Vallenet D."/>
            <person name="Wu Z."/>
            <person name="Marx C.J."/>
            <person name="Vorholt J.A."/>
            <person name="Olson M.V."/>
            <person name="Kaul R."/>
            <person name="Weissenbach J."/>
            <person name="Medigue C."/>
            <person name="Lidstrom M.E."/>
        </authorList>
    </citation>
    <scope>NUCLEOTIDE SEQUENCE [LARGE SCALE GENOMIC DNA]</scope>
    <source>
        <strain>ATCC 14718 / DSM 1338 / JCM 2805 / NCIMB 9133 / AM1</strain>
    </source>
</reference>
<reference key="2">
    <citation type="journal article" date="2012" name="PLoS ONE">
        <title>A catalytic role of XoxF1 as La3+-dependent methanol dehydrogenase in Methylobacterium extorquens strain AM1.</title>
        <authorList>
            <person name="Nakagawa T."/>
            <person name="Mitsui R."/>
            <person name="Tani A."/>
            <person name="Sasa K."/>
            <person name="Tashiro S."/>
            <person name="Iwama T."/>
            <person name="Hayakawa T."/>
            <person name="Kawai K."/>
        </authorList>
    </citation>
    <scope>PROTEIN SEQUENCE OF 22-41</scope>
    <scope>FUNCTION</scope>
    <scope>CATALYTIC ACTIVITY</scope>
    <scope>COFACTOR</scope>
    <scope>SUBUNIT</scope>
    <scope>SUBCELLULAR LOCATION</scope>
    <source>
        <strain>ATCC 14718 / DSM 1338 / JCM 2805 / NCIMB 9133 / AM1</strain>
    </source>
</reference>
<reference key="3">
    <citation type="journal article" date="2019" name="Sci. Rep.">
        <title>Contrasting in vitro and in vivo methanol oxidation activities of lanthanide-dependent alcohol dehydrogenases XoxF1 and ExaF from Methylobacterium extorquens AM1.</title>
        <authorList>
            <person name="Good N.M."/>
            <person name="Moore R.S."/>
            <person name="Suriano C.J."/>
            <person name="Martinez-Gomez N.C."/>
        </authorList>
    </citation>
    <scope>FUNCTION</scope>
    <scope>CATALYTIC ACTIVITY</scope>
    <scope>COFACTOR</scope>
    <scope>BIOPHYSICOCHEMICAL PROPERTIES</scope>
    <scope>INDUCTION BY LANTHANIDES</scope>
    <source>
        <strain>ATCC 14718 / DSM 1338 / JCM 2805 / NCIMB 9133 / AM1</strain>
    </source>
</reference>
<reference evidence="13 14" key="4">
    <citation type="journal article" date="2020" name="J. Biol. Chem.">
        <title>Lanthanide-dependent alcohol dehydrogenases require an essential aspartate residue for metal coordination and enzymatic function.</title>
        <authorList>
            <person name="Good N.M."/>
            <person name="Fellner M."/>
            <person name="Demirer K."/>
            <person name="Hu J."/>
            <person name="Hausinger R.P."/>
            <person name="Martinez-Gomez N.C."/>
        </authorList>
    </citation>
    <scope>X-RAY CRYSTALLOGRAPHY (2.80 ANGSTROMS) IN COMPLEXES WITH PQQ AND LA(3+)</scope>
    <scope>FUNCTION</scope>
    <scope>CATALYTIC ACTIVITY</scope>
    <scope>COFACTOR</scope>
    <scope>DISULFIDE BONDS</scope>
    <scope>MUTAGENESIS OF ASP-320</scope>
    <source>
        <strain>ATCC 14718 / DSM 1338 / JCM 2805 / NCIMB 9133 / AM1</strain>
    </source>
</reference>